<reference evidence="8 9" key="1">
    <citation type="journal article" date="1999" name="EMBO J.">
        <title>Anopheles gambiae Ag-STAT, a new insect member of the STAT family is activated in response to bacterial infection.</title>
        <authorList>
            <person name="Barillas-Mury C."/>
            <person name="Han Y.-S."/>
            <person name="Seeley D."/>
            <person name="Kafatos F.C."/>
        </authorList>
    </citation>
    <scope>NUCLEOTIDE SEQUENCE [GENOMIC DNA]</scope>
    <scope>FUNCTION</scope>
    <scope>TISSUE SPECIFICITY</scope>
    <scope>DEVELOPMENTAL STAGE</scope>
    <scope>INDUCTION</scope>
    <source>
        <strain evidence="9">G3</strain>
    </source>
</reference>
<reference evidence="8 10" key="2">
    <citation type="journal article" date="2002" name="Science">
        <title>The genome sequence of the malaria mosquito Anopheles gambiae.</title>
        <authorList>
            <person name="Holt R.A."/>
            <person name="Subramanian G.M."/>
            <person name="Halpern A."/>
            <person name="Sutton G.G."/>
            <person name="Charlab R."/>
            <person name="Nusskern D.R."/>
            <person name="Wincker P."/>
            <person name="Clark A.G."/>
            <person name="Ribeiro J.M.C."/>
            <person name="Wides R."/>
            <person name="Salzberg S.L."/>
            <person name="Loftus B.J."/>
            <person name="Yandell M.D."/>
            <person name="Majoros W.H."/>
            <person name="Rusch D.B."/>
            <person name="Lai Z."/>
            <person name="Kraft C.L."/>
            <person name="Abril J.F."/>
            <person name="Anthouard V."/>
            <person name="Arensburger P."/>
            <person name="Atkinson P.W."/>
            <person name="Baden H."/>
            <person name="de Berardinis V."/>
            <person name="Baldwin D."/>
            <person name="Benes V."/>
            <person name="Biedler J."/>
            <person name="Blass C."/>
            <person name="Bolanos R."/>
            <person name="Boscus D."/>
            <person name="Barnstead M."/>
            <person name="Cai S."/>
            <person name="Center A."/>
            <person name="Chaturverdi K."/>
            <person name="Christophides G.K."/>
            <person name="Chrystal M.A.M."/>
            <person name="Clamp M."/>
            <person name="Cravchik A."/>
            <person name="Curwen V."/>
            <person name="Dana A."/>
            <person name="Delcher A."/>
            <person name="Dew I."/>
            <person name="Evans C.A."/>
            <person name="Flanigan M."/>
            <person name="Grundschober-Freimoser A."/>
            <person name="Friedli L."/>
            <person name="Gu Z."/>
            <person name="Guan P."/>
            <person name="Guigo R."/>
            <person name="Hillenmeyer M.E."/>
            <person name="Hladun S.L."/>
            <person name="Hogan J.R."/>
            <person name="Hong Y.S."/>
            <person name="Hoover J."/>
            <person name="Jaillon O."/>
            <person name="Ke Z."/>
            <person name="Kodira C.D."/>
            <person name="Kokoza E."/>
            <person name="Koutsos A."/>
            <person name="Letunic I."/>
            <person name="Levitsky A.A."/>
            <person name="Liang Y."/>
            <person name="Lin J.-J."/>
            <person name="Lobo N.F."/>
            <person name="Lopez J.R."/>
            <person name="Malek J.A."/>
            <person name="McIntosh T.C."/>
            <person name="Meister S."/>
            <person name="Miller J.R."/>
            <person name="Mobarry C."/>
            <person name="Mongin E."/>
            <person name="Murphy S.D."/>
            <person name="O'Brochta D.A."/>
            <person name="Pfannkoch C."/>
            <person name="Qi R."/>
            <person name="Regier M.A."/>
            <person name="Remington K."/>
            <person name="Shao H."/>
            <person name="Sharakhova M.V."/>
            <person name="Sitter C.D."/>
            <person name="Shetty J."/>
            <person name="Smith T.J."/>
            <person name="Strong R."/>
            <person name="Sun J."/>
            <person name="Thomasova D."/>
            <person name="Ton L.Q."/>
            <person name="Topalis P."/>
            <person name="Tu Z.J."/>
            <person name="Unger M.F."/>
            <person name="Walenz B."/>
            <person name="Wang A.H."/>
            <person name="Wang J."/>
            <person name="Wang M."/>
            <person name="Wang X."/>
            <person name="Woodford K.J."/>
            <person name="Wortman J.R."/>
            <person name="Wu M."/>
            <person name="Yao A."/>
            <person name="Zdobnov E.M."/>
            <person name="Zhang H."/>
            <person name="Zhao Q."/>
            <person name="Zhao S."/>
            <person name="Zhu S.C."/>
            <person name="Zhimulev I."/>
            <person name="Coluzzi M."/>
            <person name="della Torre A."/>
            <person name="Roth C.W."/>
            <person name="Louis C."/>
            <person name="Kalush F."/>
            <person name="Mural R.J."/>
            <person name="Myers E.W."/>
            <person name="Adams M.D."/>
            <person name="Smith H.O."/>
            <person name="Broder S."/>
            <person name="Gardner M.J."/>
            <person name="Fraser C.M."/>
            <person name="Birney E."/>
            <person name="Bork P."/>
            <person name="Brey P.T."/>
            <person name="Venter J.C."/>
            <person name="Weissenbach J."/>
            <person name="Kafatos F.C."/>
            <person name="Collins F.H."/>
            <person name="Hoffman S.L."/>
        </authorList>
    </citation>
    <scope>NUCLEOTIDE SEQUENCE [LARGE SCALE GENOMIC DNA]</scope>
    <source>
        <strain evidence="10">PEST</strain>
    </source>
</reference>
<organism>
    <name type="scientific">Anopheles gambiae</name>
    <name type="common">African malaria mosquito</name>
    <dbReference type="NCBI Taxonomy" id="7165"/>
    <lineage>
        <taxon>Eukaryota</taxon>
        <taxon>Metazoa</taxon>
        <taxon>Ecdysozoa</taxon>
        <taxon>Arthropoda</taxon>
        <taxon>Hexapoda</taxon>
        <taxon>Insecta</taxon>
        <taxon>Pterygota</taxon>
        <taxon>Neoptera</taxon>
        <taxon>Endopterygota</taxon>
        <taxon>Diptera</taxon>
        <taxon>Nematocera</taxon>
        <taxon>Culicoidea</taxon>
        <taxon>Culicidae</taxon>
        <taxon>Anophelinae</taxon>
        <taxon>Anopheles</taxon>
    </lineage>
</organism>
<accession>Q7QDU4</accession>
<accession>O97164</accession>
<sequence length="722" mass="83879">METRLHQLPPCILEQFHFLNDLKYPVLIRQHLGNWIKDSLHNAPTYTNNMQSMYELDAAKFFTALVNEVDQVSANLPNKRKCLLCRSAIMLRDQNFQNLTQLYLTLLHQIQPNCEKGCKTEYTIAQTSSDGQQTDVLYGLQQLHVMERNNWKETQQLIQECEQDHVQRLSNQRSHNKRIQCYSLKQRSLVDAFQKTIRKAEEVLNLVYNKYIFEWQKTQMFPEVRSTNAYSLDEIQTWYESLAAIMWNTKDQIHLTMKSQLREHVSQEINSDLWKVMKDVKDFIKLLLHKAFIVENQPPQVMKMNTRFCATVRLLIDNALIMKIGNPKVTVSIISETQAQQIQSTNAAADFSAGEIENNIGNLQYQLSNKFLANFSNMRLKKINRGNRKLNKLVVDEKFALLFQSSFTLEQEELTVTVWTLSLPAVVIVHVNQEQLAWTTIIWDNLCAKADRKLFEVPNLIPWNRLVEAISMTFSARVGRGLTDENMQYMYRKAYRDKLSFSVSNDQMISFAQFCKDTTPECNYTFWEWLYAALKIIRDHLQVLWVDNTIIGFIHKSTAEKYLAKCVPGTFLLRFTDSVLGGISIAWVHESNDGQRQVLHIQPFTAKDLVVRSLANRICDLGELTYLYPTIPKQEAFGRYTAPAIQKPRSKHYISAEMRTVLIFAPSSNQSSSSTPNAEQSPSTSSNDMFSNEYVLTNLDEIYKFEIENDDMLSIQDYWEQQ</sequence>
<keyword id="KW-0010">Activator</keyword>
<keyword id="KW-0963">Cytoplasm</keyword>
<keyword id="KW-0217">Developmental protein</keyword>
<keyword id="KW-0238">DNA-binding</keyword>
<keyword id="KW-0539">Nucleus</keyword>
<keyword id="KW-0597">Phosphoprotein</keyword>
<keyword id="KW-1185">Reference proteome</keyword>
<keyword id="KW-0727">SH2 domain</keyword>
<keyword id="KW-0804">Transcription</keyword>
<keyword id="KW-0805">Transcription regulation</keyword>
<gene>
    <name type="primary">Stat</name>
    <name type="ORF">AGAP010423</name>
</gene>
<comment type="function">
    <text evidence="3 7">Signal transduction and activation of transcription. Plays an important role in the segmental pattern formation in the early embryo by activating specific stripes of pair rule gene expression (By similarity). The STAT pathway directly participates in immune responses in insects.</text>
</comment>
<comment type="subunit">
    <text evidence="2">Forms a homodimer or a heterodimer with a related family member.</text>
</comment>
<comment type="subcellular location">
    <subcellularLocation>
        <location evidence="1">Cytoplasm</location>
    </subcellularLocation>
    <subcellularLocation>
        <location evidence="1">Nucleus</location>
    </subcellularLocation>
    <text evidence="1">Translocated into the nucleus in response to phosphorylation.</text>
</comment>
<comment type="tissue specificity">
    <text evidence="7">Expressed in hemocytes, pericardial cells, midgut, skeletal muscle and fat body cells.</text>
</comment>
<comment type="developmental stage">
    <text evidence="7">Expressed at all developmental stages.</text>
</comment>
<comment type="induction">
    <text evidence="7">Bacterial challenge results in nuclear translocation in fat body cells and induction of DNA-binding activity that recognizes a STAT target site. In vitro treatment with pervanadate (vanadate and H(2)O(2)) translocates protein to the nucleus in midgut epithelial cells.</text>
</comment>
<comment type="similarity">
    <text evidence="4">Belongs to the transcription factor STAT family.</text>
</comment>
<feature type="chain" id="PRO_0000233907" description="Signal transducer and transcription activator">
    <location>
        <begin position="1"/>
        <end position="722"/>
    </location>
</feature>
<feature type="domain" description="SH2" evidence="5">
    <location>
        <begin position="545"/>
        <end position="644"/>
    </location>
</feature>
<feature type="region of interest" description="Disordered" evidence="6">
    <location>
        <begin position="667"/>
        <end position="689"/>
    </location>
</feature>
<feature type="compositionally biased region" description="Polar residues" evidence="6">
    <location>
        <begin position="675"/>
        <end position="689"/>
    </location>
</feature>
<feature type="sequence conflict" description="In Ref. 1; CAA09070." evidence="8" ref="1">
    <original>Q</original>
    <variation>H</variation>
    <location>
        <position position="155"/>
    </location>
</feature>
<feature type="sequence conflict" description="In Ref. 1; CAA09070." evidence="8" ref="1">
    <original>N</original>
    <variation>Y</variation>
    <location>
        <position position="176"/>
    </location>
</feature>
<feature type="sequence conflict" description="In Ref. 1; CAA09070." evidence="8" ref="1">
    <original>T</original>
    <variation>S</variation>
    <location>
        <position position="311"/>
    </location>
</feature>
<feature type="sequence conflict" description="In Ref. 1; CAA09070." evidence="8" ref="1">
    <original>D</original>
    <variation>N</variation>
    <location>
        <position position="547"/>
    </location>
</feature>
<feature type="sequence conflict" description="In Ref. 1; CAA09070." evidence="8" ref="1">
    <original>T</original>
    <variation>A</variation>
    <location>
        <position position="684"/>
    </location>
</feature>
<feature type="sequence conflict" description="In Ref. 1; CAA09070." evidence="8" ref="1">
    <original>NDM</original>
    <variation>KDT</variation>
    <location>
        <begin position="687"/>
        <end position="689"/>
    </location>
</feature>
<dbReference type="EMBL" id="AJ010299">
    <property type="protein sequence ID" value="CAA09070.1"/>
    <property type="molecule type" value="Genomic_DNA"/>
</dbReference>
<dbReference type="EMBL" id="AAAB01008849">
    <property type="protein sequence ID" value="EAA07203.1"/>
    <property type="molecule type" value="Genomic_DNA"/>
</dbReference>
<dbReference type="RefSeq" id="XP_311525.1">
    <property type="nucleotide sequence ID" value="XM_311525.1"/>
</dbReference>
<dbReference type="SMR" id="Q7QDU4"/>
<dbReference type="FunCoup" id="Q7QDU4">
    <property type="interactions" value="1076"/>
</dbReference>
<dbReference type="STRING" id="7165.Q7QDU4"/>
<dbReference type="PaxDb" id="7165-AGAP010423-PA"/>
<dbReference type="EnsemblMetazoa" id="AGAP010423-RA">
    <property type="protein sequence ID" value="AGAP010423-PA"/>
    <property type="gene ID" value="AGAP010423"/>
</dbReference>
<dbReference type="VEuPathDB" id="VectorBase:AGAMI1_001270"/>
<dbReference type="VEuPathDB" id="VectorBase:AGAP010423"/>
<dbReference type="eggNOG" id="KOG3667">
    <property type="taxonomic scope" value="Eukaryota"/>
</dbReference>
<dbReference type="HOGENOM" id="CLU_014189_2_0_1"/>
<dbReference type="InParanoid" id="Q7QDU4"/>
<dbReference type="OMA" id="HYISAEM"/>
<dbReference type="PhylomeDB" id="Q7QDU4"/>
<dbReference type="Proteomes" id="UP000007062">
    <property type="component" value="Chromosome 3L"/>
</dbReference>
<dbReference type="GO" id="GO:0005737">
    <property type="term" value="C:cytoplasm"/>
    <property type="evidence" value="ECO:0000318"/>
    <property type="project" value="GO_Central"/>
</dbReference>
<dbReference type="GO" id="GO:0005634">
    <property type="term" value="C:nucleus"/>
    <property type="evidence" value="ECO:0000318"/>
    <property type="project" value="GO_Central"/>
</dbReference>
<dbReference type="GO" id="GO:0000981">
    <property type="term" value="F:DNA-binding transcription factor activity, RNA polymerase II-specific"/>
    <property type="evidence" value="ECO:0000318"/>
    <property type="project" value="GO_Central"/>
</dbReference>
<dbReference type="GO" id="GO:0000978">
    <property type="term" value="F:RNA polymerase II cis-regulatory region sequence-specific DNA binding"/>
    <property type="evidence" value="ECO:0000318"/>
    <property type="project" value="GO_Central"/>
</dbReference>
<dbReference type="GO" id="GO:0007259">
    <property type="term" value="P:cell surface receptor signaling pathway via JAK-STAT"/>
    <property type="evidence" value="ECO:0000318"/>
    <property type="project" value="GO_Central"/>
</dbReference>
<dbReference type="GO" id="GO:0006952">
    <property type="term" value="P:defense response"/>
    <property type="evidence" value="ECO:0000318"/>
    <property type="project" value="GO_Central"/>
</dbReference>
<dbReference type="GO" id="GO:0042127">
    <property type="term" value="P:regulation of cell population proliferation"/>
    <property type="evidence" value="ECO:0000318"/>
    <property type="project" value="GO_Central"/>
</dbReference>
<dbReference type="GO" id="GO:0006357">
    <property type="term" value="P:regulation of transcription by RNA polymerase II"/>
    <property type="evidence" value="ECO:0000318"/>
    <property type="project" value="GO_Central"/>
</dbReference>
<dbReference type="CDD" id="cd09919">
    <property type="entry name" value="SH2_STAT_family"/>
    <property type="match status" value="1"/>
</dbReference>
<dbReference type="CDD" id="cd14801">
    <property type="entry name" value="STAT_DBD"/>
    <property type="match status" value="1"/>
</dbReference>
<dbReference type="FunFam" id="3.30.505.10:FF:000057">
    <property type="entry name" value="Signal transducer and activator of transcription"/>
    <property type="match status" value="1"/>
</dbReference>
<dbReference type="FunFam" id="2.60.40.630:FF:000003">
    <property type="entry name" value="Signal transducer and transcription activator 6"/>
    <property type="match status" value="1"/>
</dbReference>
<dbReference type="Gene3D" id="1.10.238.10">
    <property type="entry name" value="EF-hand"/>
    <property type="match status" value="1"/>
</dbReference>
<dbReference type="Gene3D" id="3.30.505.10">
    <property type="entry name" value="SH2 domain"/>
    <property type="match status" value="1"/>
</dbReference>
<dbReference type="Gene3D" id="1.20.1050.20">
    <property type="entry name" value="STAT transcription factor, all-alpha domain"/>
    <property type="match status" value="1"/>
</dbReference>
<dbReference type="Gene3D" id="2.60.40.630">
    <property type="entry name" value="STAT transcription factor, DNA-binding domain"/>
    <property type="match status" value="1"/>
</dbReference>
<dbReference type="Gene3D" id="1.10.532.10">
    <property type="entry name" value="STAT transcription factor, N-terminal domain"/>
    <property type="match status" value="1"/>
</dbReference>
<dbReference type="InterPro" id="IPR008967">
    <property type="entry name" value="p53-like_TF_DNA-bd_sf"/>
</dbReference>
<dbReference type="InterPro" id="IPR000980">
    <property type="entry name" value="SH2"/>
</dbReference>
<dbReference type="InterPro" id="IPR036860">
    <property type="entry name" value="SH2_dom_sf"/>
</dbReference>
<dbReference type="InterPro" id="IPR001217">
    <property type="entry name" value="STAT"/>
</dbReference>
<dbReference type="InterPro" id="IPR048988">
    <property type="entry name" value="STAT_linker"/>
</dbReference>
<dbReference type="InterPro" id="IPR036535">
    <property type="entry name" value="STAT_N_sf"/>
</dbReference>
<dbReference type="InterPro" id="IPR013800">
    <property type="entry name" value="STAT_TF_alpha"/>
</dbReference>
<dbReference type="InterPro" id="IPR015988">
    <property type="entry name" value="STAT_TF_coiled-coil"/>
</dbReference>
<dbReference type="InterPro" id="IPR013801">
    <property type="entry name" value="STAT_TF_DNA-bd"/>
</dbReference>
<dbReference type="InterPro" id="IPR012345">
    <property type="entry name" value="STAT_TF_DNA-bd_N"/>
</dbReference>
<dbReference type="InterPro" id="IPR013799">
    <property type="entry name" value="STAT_TF_prot_interaction"/>
</dbReference>
<dbReference type="PANTHER" id="PTHR11801">
    <property type="entry name" value="SIGNAL TRANSDUCER AND ACTIVATOR OF TRANSCRIPTION"/>
    <property type="match status" value="1"/>
</dbReference>
<dbReference type="Pfam" id="PF00017">
    <property type="entry name" value="SH2"/>
    <property type="match status" value="1"/>
</dbReference>
<dbReference type="Pfam" id="PF01017">
    <property type="entry name" value="STAT_alpha"/>
    <property type="match status" value="1"/>
</dbReference>
<dbReference type="Pfam" id="PF02864">
    <property type="entry name" value="STAT_bind"/>
    <property type="match status" value="1"/>
</dbReference>
<dbReference type="Pfam" id="PF21354">
    <property type="entry name" value="STAT_linker"/>
    <property type="match status" value="1"/>
</dbReference>
<dbReference type="SMART" id="SM00252">
    <property type="entry name" value="SH2"/>
    <property type="match status" value="1"/>
</dbReference>
<dbReference type="SMART" id="SM00964">
    <property type="entry name" value="STAT_int"/>
    <property type="match status" value="1"/>
</dbReference>
<dbReference type="SUPFAM" id="SSF49417">
    <property type="entry name" value="p53-like transcription factors"/>
    <property type="match status" value="1"/>
</dbReference>
<dbReference type="SUPFAM" id="SSF55550">
    <property type="entry name" value="SH2 domain"/>
    <property type="match status" value="1"/>
</dbReference>
<dbReference type="SUPFAM" id="SSF47655">
    <property type="entry name" value="STAT"/>
    <property type="match status" value="1"/>
</dbReference>
<dbReference type="SUPFAM" id="SSF48092">
    <property type="entry name" value="Transcription factor STAT-4 N-domain"/>
    <property type="match status" value="1"/>
</dbReference>
<dbReference type="PROSITE" id="PS50001">
    <property type="entry name" value="SH2"/>
    <property type="match status" value="1"/>
</dbReference>
<protein>
    <recommendedName>
        <fullName>Signal transducer and transcription activator</fullName>
    </recommendedName>
    <alternativeName>
        <fullName>Ag-STAT</fullName>
    </alternativeName>
</protein>
<evidence type="ECO:0000250" key="1"/>
<evidence type="ECO:0000250" key="2">
    <source>
        <dbReference type="UniProtKB" id="P51692"/>
    </source>
</evidence>
<evidence type="ECO:0000250" key="3">
    <source>
        <dbReference type="UniProtKB" id="Q24151"/>
    </source>
</evidence>
<evidence type="ECO:0000255" key="4"/>
<evidence type="ECO:0000255" key="5">
    <source>
        <dbReference type="PROSITE-ProRule" id="PRU00191"/>
    </source>
</evidence>
<evidence type="ECO:0000256" key="6">
    <source>
        <dbReference type="SAM" id="MobiDB-lite"/>
    </source>
</evidence>
<evidence type="ECO:0000269" key="7">
    <source>
    </source>
</evidence>
<evidence type="ECO:0000305" key="8"/>
<evidence type="ECO:0000312" key="9">
    <source>
        <dbReference type="EMBL" id="CAA09070.1"/>
    </source>
</evidence>
<evidence type="ECO:0000312" key="10">
    <source>
        <dbReference type="EMBL" id="EAA07203.1"/>
    </source>
</evidence>
<name>STAT_ANOGA</name>
<proteinExistence type="evidence at transcript level"/>